<feature type="signal peptide" evidence="1">
    <location>
        <begin position="1"/>
        <end position="20"/>
    </location>
</feature>
<feature type="chain" id="PRO_5000112632" description="LPS-assembly protein LptD">
    <location>
        <begin position="21"/>
        <end position="821"/>
    </location>
</feature>
<accession>Q1QZ34</accession>
<reference key="1">
    <citation type="journal article" date="2011" name="Stand. Genomic Sci.">
        <title>Complete genome sequence of the halophilic and highly halotolerant Chromohalobacter salexigens type strain (1H11(T)).</title>
        <authorList>
            <person name="Copeland A."/>
            <person name="O'Connor K."/>
            <person name="Lucas S."/>
            <person name="Lapidus A."/>
            <person name="Berry K.W."/>
            <person name="Detter J.C."/>
            <person name="Del Rio T.G."/>
            <person name="Hammon N."/>
            <person name="Dalin E."/>
            <person name="Tice H."/>
            <person name="Pitluck S."/>
            <person name="Bruce D."/>
            <person name="Goodwin L."/>
            <person name="Han C."/>
            <person name="Tapia R."/>
            <person name="Saunders E."/>
            <person name="Schmutz J."/>
            <person name="Brettin T."/>
            <person name="Larimer F."/>
            <person name="Land M."/>
            <person name="Hauser L."/>
            <person name="Vargas C."/>
            <person name="Nieto J.J."/>
            <person name="Kyrpides N.C."/>
            <person name="Ivanova N."/>
            <person name="Goker M."/>
            <person name="Klenk H.P."/>
            <person name="Csonka L.N."/>
            <person name="Woyke T."/>
        </authorList>
    </citation>
    <scope>NUCLEOTIDE SEQUENCE [LARGE SCALE GENOMIC DNA]</scope>
    <source>
        <strain>ATCC BAA-138 / DSM 3043 / CIP 106854 / NCIMB 13768 / 1H11</strain>
    </source>
</reference>
<keyword id="KW-0998">Cell outer membrane</keyword>
<keyword id="KW-0472">Membrane</keyword>
<keyword id="KW-1185">Reference proteome</keyword>
<keyword id="KW-0732">Signal</keyword>
<sequence length="821" mass="93649">MGKRLFWTALSGLMVSAAHAAPPAPLPAQQLDWQPWGDQAPNGALCSGRYVEPGYRLSAGDTPRQVRTDSATAAYGDGGATVLAGEVVLRRDDTQLEAPRVRVNAERDRAFAEGPTAVRYPGLLVRGGDASMALDGDAAQVDNAHYVIHEQRVRGDAIELQRLPDGRYRLDDASFTTCEPGNRLWRMVGSDVTLDRAEGFGTATHARLEMGDVPVFYWPWLRFPIDDRRQSGFLWPTLGFSGDGLDYTQPYYLNLAPNYDATLSPRWMSEHGTMLGGEFRYLFGSDQGTIEGAYLASDKGGASDNPNDPDDAFEDESRWYIDYRHAGRFSPRLDYQLAYGAASDGRYFDDFGRDFAEQDTDHLLRLARTTYRGDTWRLDARAQGYQKLDYPLDEDDKPFYRLPSLSADARWRQDSGFYQEWNSNATYFWRDLHGVDSQGRWTDEETGNRRTIPLREAANGSRLHLTPALGWRAEPSWGFLEPRAQLWQSSYQLDYGNRQTDRDENPSLVAPVLSMDSGLIFERDTSLFGSDWRQTLEPRLYYAYVPERDQSDFPDFDTSERAVSWGQLWSPYRFTGADRLGDVNKLSYGASTRFLEDDTGRERLSLSVGQSSYFSDRNIDMNGDPDTLPNKERNYQDWYNATRDRSPVITQLDWRISERWRSRYAWFYDADRSVTEKASAYLQYNDPAGHVLNLGYSWQLEGFEPADDAEDRLGYNREDYDVSFAYQATPSLDLIGRFLYDNTNDRAMEQLAGVQFNDCCSAVQLVWREWIEDNDTANTIDDDYTDRGVFLRFVFKGLGGVGQEADTYFEEAIPGYRATRF</sequence>
<protein>
    <recommendedName>
        <fullName evidence="1">LPS-assembly protein LptD</fullName>
    </recommendedName>
</protein>
<comment type="function">
    <text evidence="1">Together with LptE, is involved in the assembly of lipopolysaccharide (LPS) at the surface of the outer membrane.</text>
</comment>
<comment type="subunit">
    <text evidence="1">Component of the lipopolysaccharide transport and assembly complex. Interacts with LptE and LptA.</text>
</comment>
<comment type="subcellular location">
    <subcellularLocation>
        <location evidence="1">Cell outer membrane</location>
    </subcellularLocation>
</comment>
<comment type="similarity">
    <text evidence="1">Belongs to the LptD family.</text>
</comment>
<evidence type="ECO:0000255" key="1">
    <source>
        <dbReference type="HAMAP-Rule" id="MF_01411"/>
    </source>
</evidence>
<dbReference type="EMBL" id="CP000285">
    <property type="protein sequence ID" value="ABE58274.1"/>
    <property type="molecule type" value="Genomic_DNA"/>
</dbReference>
<dbReference type="RefSeq" id="WP_011506220.1">
    <property type="nucleotide sequence ID" value="NC_007963.1"/>
</dbReference>
<dbReference type="SMR" id="Q1QZ34"/>
<dbReference type="STRING" id="290398.Csal_0917"/>
<dbReference type="GeneID" id="95333673"/>
<dbReference type="KEGG" id="csa:Csal_0917"/>
<dbReference type="eggNOG" id="COG1452">
    <property type="taxonomic scope" value="Bacteria"/>
</dbReference>
<dbReference type="HOGENOM" id="CLU_009039_0_0_6"/>
<dbReference type="OrthoDB" id="9760225at2"/>
<dbReference type="Proteomes" id="UP000000239">
    <property type="component" value="Chromosome"/>
</dbReference>
<dbReference type="GO" id="GO:0009279">
    <property type="term" value="C:cell outer membrane"/>
    <property type="evidence" value="ECO:0007669"/>
    <property type="project" value="UniProtKB-SubCell"/>
</dbReference>
<dbReference type="GO" id="GO:1990351">
    <property type="term" value="C:transporter complex"/>
    <property type="evidence" value="ECO:0007669"/>
    <property type="project" value="TreeGrafter"/>
</dbReference>
<dbReference type="GO" id="GO:0043165">
    <property type="term" value="P:Gram-negative-bacterium-type cell outer membrane assembly"/>
    <property type="evidence" value="ECO:0007669"/>
    <property type="project" value="UniProtKB-UniRule"/>
</dbReference>
<dbReference type="GO" id="GO:0015920">
    <property type="term" value="P:lipopolysaccharide transport"/>
    <property type="evidence" value="ECO:0007669"/>
    <property type="project" value="InterPro"/>
</dbReference>
<dbReference type="HAMAP" id="MF_01411">
    <property type="entry name" value="LPS_assembly_LptD"/>
    <property type="match status" value="1"/>
</dbReference>
<dbReference type="InterPro" id="IPR020889">
    <property type="entry name" value="LipoPS_assembly_LptD"/>
</dbReference>
<dbReference type="InterPro" id="IPR050218">
    <property type="entry name" value="LptD"/>
</dbReference>
<dbReference type="InterPro" id="IPR007543">
    <property type="entry name" value="LptD_C"/>
</dbReference>
<dbReference type="InterPro" id="IPR005653">
    <property type="entry name" value="OstA-like_N"/>
</dbReference>
<dbReference type="PANTHER" id="PTHR30189">
    <property type="entry name" value="LPS-ASSEMBLY PROTEIN"/>
    <property type="match status" value="1"/>
</dbReference>
<dbReference type="PANTHER" id="PTHR30189:SF1">
    <property type="entry name" value="LPS-ASSEMBLY PROTEIN LPTD"/>
    <property type="match status" value="1"/>
</dbReference>
<dbReference type="Pfam" id="PF04453">
    <property type="entry name" value="LptD"/>
    <property type="match status" value="1"/>
</dbReference>
<dbReference type="Pfam" id="PF03968">
    <property type="entry name" value="LptD_N"/>
    <property type="match status" value="1"/>
</dbReference>
<gene>
    <name evidence="1" type="primary">lptD</name>
    <name type="synonym">imp</name>
    <name type="synonym">ostA</name>
    <name type="ordered locus">Csal_0917</name>
</gene>
<proteinExistence type="inferred from homology"/>
<organism>
    <name type="scientific">Chromohalobacter salexigens (strain ATCC BAA-138 / DSM 3043 / CIP 106854 / NCIMB 13768 / 1H11)</name>
    <dbReference type="NCBI Taxonomy" id="290398"/>
    <lineage>
        <taxon>Bacteria</taxon>
        <taxon>Pseudomonadati</taxon>
        <taxon>Pseudomonadota</taxon>
        <taxon>Gammaproteobacteria</taxon>
        <taxon>Oceanospirillales</taxon>
        <taxon>Halomonadaceae</taxon>
        <taxon>Chromohalobacter</taxon>
    </lineage>
</organism>
<name>LPTD_CHRSD</name>